<feature type="chain" id="PRO_1000139552" description="CTP synthase">
    <location>
        <begin position="1"/>
        <end position="537"/>
    </location>
</feature>
<feature type="domain" description="Glutamine amidotransferase type-1" evidence="1">
    <location>
        <begin position="290"/>
        <end position="536"/>
    </location>
</feature>
<feature type="region of interest" description="Amidoligase domain" evidence="1">
    <location>
        <begin position="1"/>
        <end position="265"/>
    </location>
</feature>
<feature type="active site" description="Nucleophile; for glutamine hydrolysis" evidence="1">
    <location>
        <position position="379"/>
    </location>
</feature>
<feature type="active site" evidence="1">
    <location>
        <position position="509"/>
    </location>
</feature>
<feature type="active site" evidence="1">
    <location>
        <position position="511"/>
    </location>
</feature>
<feature type="binding site" evidence="1">
    <location>
        <position position="13"/>
    </location>
    <ligand>
        <name>CTP</name>
        <dbReference type="ChEBI" id="CHEBI:37563"/>
        <note>allosteric inhibitor</note>
    </ligand>
</feature>
<feature type="binding site" evidence="1">
    <location>
        <position position="13"/>
    </location>
    <ligand>
        <name>UTP</name>
        <dbReference type="ChEBI" id="CHEBI:46398"/>
    </ligand>
</feature>
<feature type="binding site" evidence="1">
    <location>
        <begin position="14"/>
        <end position="19"/>
    </location>
    <ligand>
        <name>ATP</name>
        <dbReference type="ChEBI" id="CHEBI:30616"/>
    </ligand>
</feature>
<feature type="binding site" evidence="1">
    <location>
        <position position="71"/>
    </location>
    <ligand>
        <name>ATP</name>
        <dbReference type="ChEBI" id="CHEBI:30616"/>
    </ligand>
</feature>
<feature type="binding site" evidence="1">
    <location>
        <position position="71"/>
    </location>
    <ligand>
        <name>Mg(2+)</name>
        <dbReference type="ChEBI" id="CHEBI:18420"/>
    </ligand>
</feature>
<feature type="binding site" evidence="1">
    <location>
        <position position="139"/>
    </location>
    <ligand>
        <name>Mg(2+)</name>
        <dbReference type="ChEBI" id="CHEBI:18420"/>
    </ligand>
</feature>
<feature type="binding site" evidence="1">
    <location>
        <begin position="146"/>
        <end position="148"/>
    </location>
    <ligand>
        <name>CTP</name>
        <dbReference type="ChEBI" id="CHEBI:37563"/>
        <note>allosteric inhibitor</note>
    </ligand>
</feature>
<feature type="binding site" evidence="1">
    <location>
        <position position="222"/>
    </location>
    <ligand>
        <name>CTP</name>
        <dbReference type="ChEBI" id="CHEBI:37563"/>
        <note>allosteric inhibitor</note>
    </ligand>
</feature>
<feature type="binding site" evidence="1">
    <location>
        <position position="222"/>
    </location>
    <ligand>
        <name>UTP</name>
        <dbReference type="ChEBI" id="CHEBI:46398"/>
    </ligand>
</feature>
<feature type="binding site" evidence="1">
    <location>
        <position position="352"/>
    </location>
    <ligand>
        <name>L-glutamine</name>
        <dbReference type="ChEBI" id="CHEBI:58359"/>
    </ligand>
</feature>
<feature type="binding site" evidence="1">
    <location>
        <begin position="380"/>
        <end position="383"/>
    </location>
    <ligand>
        <name>L-glutamine</name>
        <dbReference type="ChEBI" id="CHEBI:58359"/>
    </ligand>
</feature>
<feature type="binding site" evidence="1">
    <location>
        <position position="403"/>
    </location>
    <ligand>
        <name>L-glutamine</name>
        <dbReference type="ChEBI" id="CHEBI:58359"/>
    </ligand>
</feature>
<feature type="binding site" evidence="1">
    <location>
        <position position="464"/>
    </location>
    <ligand>
        <name>L-glutamine</name>
        <dbReference type="ChEBI" id="CHEBI:58359"/>
    </ligand>
</feature>
<reference key="1">
    <citation type="submission" date="2007-09" db="EMBL/GenBank/DDBJ databases">
        <title>Complete genome sequence of Rickettsia rickettsii.</title>
        <authorList>
            <person name="Madan A."/>
            <person name="Fahey J."/>
            <person name="Helton E."/>
            <person name="Ketteman M."/>
            <person name="Madan A."/>
            <person name="Rodrigues S."/>
            <person name="Sanchez A."/>
            <person name="Dasch G."/>
            <person name="Eremeeva M."/>
        </authorList>
    </citation>
    <scope>NUCLEOTIDE SEQUENCE [LARGE SCALE GENOMIC DNA]</scope>
    <source>
        <strain>Sheila Smith</strain>
    </source>
</reference>
<evidence type="ECO:0000255" key="1">
    <source>
        <dbReference type="HAMAP-Rule" id="MF_01227"/>
    </source>
</evidence>
<name>PYRG_RICRS</name>
<dbReference type="EC" id="6.3.4.2" evidence="1"/>
<dbReference type="EMBL" id="CP000848">
    <property type="protein sequence ID" value="ABV76131.1"/>
    <property type="molecule type" value="Genomic_DNA"/>
</dbReference>
<dbReference type="RefSeq" id="WP_012150721.1">
    <property type="nucleotide sequence ID" value="NZ_CP121767.1"/>
</dbReference>
<dbReference type="SMR" id="A8GRV6"/>
<dbReference type="GeneID" id="79937278"/>
<dbReference type="KEGG" id="rri:A1G_02970"/>
<dbReference type="HOGENOM" id="CLU_011675_5_0_5"/>
<dbReference type="UniPathway" id="UPA00159">
    <property type="reaction ID" value="UER00277"/>
</dbReference>
<dbReference type="Proteomes" id="UP000006832">
    <property type="component" value="Chromosome"/>
</dbReference>
<dbReference type="GO" id="GO:0097268">
    <property type="term" value="C:cytoophidium"/>
    <property type="evidence" value="ECO:0007669"/>
    <property type="project" value="TreeGrafter"/>
</dbReference>
<dbReference type="GO" id="GO:0005737">
    <property type="term" value="C:cytoplasm"/>
    <property type="evidence" value="ECO:0007669"/>
    <property type="project" value="TreeGrafter"/>
</dbReference>
<dbReference type="GO" id="GO:0005524">
    <property type="term" value="F:ATP binding"/>
    <property type="evidence" value="ECO:0007669"/>
    <property type="project" value="UniProtKB-KW"/>
</dbReference>
<dbReference type="GO" id="GO:0003883">
    <property type="term" value="F:CTP synthase activity"/>
    <property type="evidence" value="ECO:0007669"/>
    <property type="project" value="UniProtKB-UniRule"/>
</dbReference>
<dbReference type="GO" id="GO:0004359">
    <property type="term" value="F:glutaminase activity"/>
    <property type="evidence" value="ECO:0007669"/>
    <property type="project" value="RHEA"/>
</dbReference>
<dbReference type="GO" id="GO:0042802">
    <property type="term" value="F:identical protein binding"/>
    <property type="evidence" value="ECO:0007669"/>
    <property type="project" value="TreeGrafter"/>
</dbReference>
<dbReference type="GO" id="GO:0046872">
    <property type="term" value="F:metal ion binding"/>
    <property type="evidence" value="ECO:0007669"/>
    <property type="project" value="UniProtKB-KW"/>
</dbReference>
<dbReference type="GO" id="GO:0044210">
    <property type="term" value="P:'de novo' CTP biosynthetic process"/>
    <property type="evidence" value="ECO:0007669"/>
    <property type="project" value="UniProtKB-UniRule"/>
</dbReference>
<dbReference type="GO" id="GO:0019856">
    <property type="term" value="P:pyrimidine nucleobase biosynthetic process"/>
    <property type="evidence" value="ECO:0007669"/>
    <property type="project" value="TreeGrafter"/>
</dbReference>
<dbReference type="CDD" id="cd03113">
    <property type="entry name" value="CTPS_N"/>
    <property type="match status" value="1"/>
</dbReference>
<dbReference type="CDD" id="cd01746">
    <property type="entry name" value="GATase1_CTP_Synthase"/>
    <property type="match status" value="1"/>
</dbReference>
<dbReference type="FunFam" id="3.40.50.300:FF:000009">
    <property type="entry name" value="CTP synthase"/>
    <property type="match status" value="1"/>
</dbReference>
<dbReference type="FunFam" id="3.40.50.880:FF:000002">
    <property type="entry name" value="CTP synthase"/>
    <property type="match status" value="1"/>
</dbReference>
<dbReference type="Gene3D" id="3.40.50.880">
    <property type="match status" value="1"/>
</dbReference>
<dbReference type="Gene3D" id="3.40.50.300">
    <property type="entry name" value="P-loop containing nucleotide triphosphate hydrolases"/>
    <property type="match status" value="1"/>
</dbReference>
<dbReference type="HAMAP" id="MF_01227">
    <property type="entry name" value="PyrG"/>
    <property type="match status" value="1"/>
</dbReference>
<dbReference type="InterPro" id="IPR029062">
    <property type="entry name" value="Class_I_gatase-like"/>
</dbReference>
<dbReference type="InterPro" id="IPR004468">
    <property type="entry name" value="CTP_synthase"/>
</dbReference>
<dbReference type="InterPro" id="IPR017456">
    <property type="entry name" value="CTP_synthase_N"/>
</dbReference>
<dbReference type="InterPro" id="IPR017926">
    <property type="entry name" value="GATASE"/>
</dbReference>
<dbReference type="InterPro" id="IPR033828">
    <property type="entry name" value="GATase1_CTP_Synthase"/>
</dbReference>
<dbReference type="InterPro" id="IPR027417">
    <property type="entry name" value="P-loop_NTPase"/>
</dbReference>
<dbReference type="NCBIfam" id="NF003792">
    <property type="entry name" value="PRK05380.1"/>
    <property type="match status" value="1"/>
</dbReference>
<dbReference type="NCBIfam" id="TIGR00337">
    <property type="entry name" value="PyrG"/>
    <property type="match status" value="1"/>
</dbReference>
<dbReference type="PANTHER" id="PTHR11550">
    <property type="entry name" value="CTP SYNTHASE"/>
    <property type="match status" value="1"/>
</dbReference>
<dbReference type="PANTHER" id="PTHR11550:SF0">
    <property type="entry name" value="CTP SYNTHASE-RELATED"/>
    <property type="match status" value="1"/>
</dbReference>
<dbReference type="Pfam" id="PF06418">
    <property type="entry name" value="CTP_synth_N"/>
    <property type="match status" value="1"/>
</dbReference>
<dbReference type="Pfam" id="PF00117">
    <property type="entry name" value="GATase"/>
    <property type="match status" value="1"/>
</dbReference>
<dbReference type="SUPFAM" id="SSF52317">
    <property type="entry name" value="Class I glutamine amidotransferase-like"/>
    <property type="match status" value="1"/>
</dbReference>
<dbReference type="SUPFAM" id="SSF52540">
    <property type="entry name" value="P-loop containing nucleoside triphosphate hydrolases"/>
    <property type="match status" value="1"/>
</dbReference>
<dbReference type="PROSITE" id="PS51273">
    <property type="entry name" value="GATASE_TYPE_1"/>
    <property type="match status" value="1"/>
</dbReference>
<keyword id="KW-0067">ATP-binding</keyword>
<keyword id="KW-0315">Glutamine amidotransferase</keyword>
<keyword id="KW-0436">Ligase</keyword>
<keyword id="KW-0460">Magnesium</keyword>
<keyword id="KW-0479">Metal-binding</keyword>
<keyword id="KW-0547">Nucleotide-binding</keyword>
<keyword id="KW-0665">Pyrimidine biosynthesis</keyword>
<comment type="function">
    <text evidence="1">Catalyzes the ATP-dependent amination of UTP to CTP with either L-glutamine or ammonia as the source of nitrogen. Regulates intracellular CTP levels through interactions with the four ribonucleotide triphosphates.</text>
</comment>
<comment type="catalytic activity">
    <reaction evidence="1">
        <text>UTP + L-glutamine + ATP + H2O = CTP + L-glutamate + ADP + phosphate + 2 H(+)</text>
        <dbReference type="Rhea" id="RHEA:26426"/>
        <dbReference type="ChEBI" id="CHEBI:15377"/>
        <dbReference type="ChEBI" id="CHEBI:15378"/>
        <dbReference type="ChEBI" id="CHEBI:29985"/>
        <dbReference type="ChEBI" id="CHEBI:30616"/>
        <dbReference type="ChEBI" id="CHEBI:37563"/>
        <dbReference type="ChEBI" id="CHEBI:43474"/>
        <dbReference type="ChEBI" id="CHEBI:46398"/>
        <dbReference type="ChEBI" id="CHEBI:58359"/>
        <dbReference type="ChEBI" id="CHEBI:456216"/>
        <dbReference type="EC" id="6.3.4.2"/>
    </reaction>
</comment>
<comment type="catalytic activity">
    <reaction evidence="1">
        <text>L-glutamine + H2O = L-glutamate + NH4(+)</text>
        <dbReference type="Rhea" id="RHEA:15889"/>
        <dbReference type="ChEBI" id="CHEBI:15377"/>
        <dbReference type="ChEBI" id="CHEBI:28938"/>
        <dbReference type="ChEBI" id="CHEBI:29985"/>
        <dbReference type="ChEBI" id="CHEBI:58359"/>
    </reaction>
</comment>
<comment type="catalytic activity">
    <reaction evidence="1">
        <text>UTP + NH4(+) + ATP = CTP + ADP + phosphate + 2 H(+)</text>
        <dbReference type="Rhea" id="RHEA:16597"/>
        <dbReference type="ChEBI" id="CHEBI:15378"/>
        <dbReference type="ChEBI" id="CHEBI:28938"/>
        <dbReference type="ChEBI" id="CHEBI:30616"/>
        <dbReference type="ChEBI" id="CHEBI:37563"/>
        <dbReference type="ChEBI" id="CHEBI:43474"/>
        <dbReference type="ChEBI" id="CHEBI:46398"/>
        <dbReference type="ChEBI" id="CHEBI:456216"/>
    </reaction>
</comment>
<comment type="activity regulation">
    <text evidence="1">Allosterically activated by GTP, when glutamine is the substrate; GTP has no effect on the reaction when ammonia is the substrate. The allosteric effector GTP functions by stabilizing the protein conformation that binds the tetrahedral intermediate(s) formed during glutamine hydrolysis. Inhibited by the product CTP, via allosteric rather than competitive inhibition.</text>
</comment>
<comment type="pathway">
    <text evidence="1">Pyrimidine metabolism; CTP biosynthesis via de novo pathway; CTP from UDP: step 2/2.</text>
</comment>
<comment type="subunit">
    <text evidence="1">Homotetramer.</text>
</comment>
<comment type="miscellaneous">
    <text evidence="1">CTPSs have evolved a hybrid strategy for distinguishing between UTP and CTP. The overlapping regions of the product feedback inhibitory and substrate sites recognize a common feature in both compounds, the triphosphate moiety. To differentiate isosteric substrate and product pyrimidine rings, an additional pocket far from the expected kinase/ligase catalytic site, specifically recognizes the cytosine and ribose portions of the product inhibitor.</text>
</comment>
<comment type="similarity">
    <text evidence="1">Belongs to the CTP synthase family.</text>
</comment>
<proteinExistence type="inferred from homology"/>
<sequence length="537" mass="60407">MVHFIFVTGGVVSSLGKGLTAASLAMLLQAKGFRVSVRKLDPYLNIDPGTMNPHEHGEVYVTDDGAETDLDLGHYERFTGVSACKFDSITTGAIYSKLLKDERLGNYAGVTVQVIPHVTNIIKDFILSNTKGVDFIICEIGGTVGDIEGLPFFEAIRQIGNQLKSENCLFIHLTLLPYVKTARELKIKPTQHSVKALRAIGISPNILVCRAERHISKGAIDKISLLCNIKSEYVVPAIDQKNIYLVPIAYHNSGLDNKVLKFFNINIMPSKLDKWYDIINRLKDSNSKVRIAIIAKYHKLKDAYKSVIEALNHAGIYYKYKIDLVWTNAENLTEESINKKLLDIDGILVPGGFGERATKGKIIAIKYARTNNIPFFGICFGMQLATIEIAQNLIGIKDAVTEEFKVDGTKIIEKINKNCEDSKITIENVKKTMRLGSYPCSLVANTIAANAYKSLEINERHRHRYKFNNEFQNIFEKHGIVFSGFSKDEEIVEIIELPLLRWFVGVQFHPEFKSKPFEAHPLFIQFIKAAIEYNKCN</sequence>
<accession>A8GRV6</accession>
<organism>
    <name type="scientific">Rickettsia rickettsii (strain Sheila Smith)</name>
    <dbReference type="NCBI Taxonomy" id="392021"/>
    <lineage>
        <taxon>Bacteria</taxon>
        <taxon>Pseudomonadati</taxon>
        <taxon>Pseudomonadota</taxon>
        <taxon>Alphaproteobacteria</taxon>
        <taxon>Rickettsiales</taxon>
        <taxon>Rickettsiaceae</taxon>
        <taxon>Rickettsieae</taxon>
        <taxon>Rickettsia</taxon>
        <taxon>spotted fever group</taxon>
    </lineage>
</organism>
<gene>
    <name evidence="1" type="primary">pyrG</name>
    <name type="ordered locus">A1G_02970</name>
</gene>
<protein>
    <recommendedName>
        <fullName evidence="1">CTP synthase</fullName>
        <ecNumber evidence="1">6.3.4.2</ecNumber>
    </recommendedName>
    <alternativeName>
        <fullName evidence="1">Cytidine 5'-triphosphate synthase</fullName>
    </alternativeName>
    <alternativeName>
        <fullName evidence="1">Cytidine triphosphate synthetase</fullName>
        <shortName evidence="1">CTP synthetase</shortName>
        <shortName evidence="1">CTPS</shortName>
    </alternativeName>
    <alternativeName>
        <fullName evidence="1">UTP--ammonia ligase</fullName>
    </alternativeName>
</protein>